<keyword id="KW-0010">Activator</keyword>
<keyword id="KW-1185">Reference proteome</keyword>
<keyword id="KW-0804">Transcription</keyword>
<keyword id="KW-0805">Transcription regulation</keyword>
<gene>
    <name type="primary">caiF</name>
    <name type="ordered locus">b0034</name>
    <name type="ordered locus">JW0033</name>
</gene>
<name>CAIF_ECOLI</name>
<accession>P0AE58</accession>
<accession>P75622</accession>
<accession>Q2MCH0</accession>
<accession>Q47081</accession>
<sequence>MCEGYVEKPLYLLIAEWMMAENRWVIAREISIHFDIEHSKAVNTLTYILSEVTEISCEVKMIPNKLEGRGCQCQRLVKVVDIDEQIYARLRNNSREKLVGVRKTPRIPAVPLTELNREQKWQMMLSKSMRR</sequence>
<reference key="1">
    <citation type="journal article" date="1996" name="J. Bacteriol.">
        <title>Identification and characterization of the caiF gene encoding a potential transcriptional activator of carnitine metabolism in Escherichia coli.</title>
        <authorList>
            <person name="Eichler K."/>
            <person name="Buchet A."/>
            <person name="Lemke R."/>
            <person name="Kleber H.-P."/>
            <person name="Mandrand-Berthelot M.-A."/>
        </authorList>
    </citation>
    <scope>NUCLEOTIDE SEQUENCE [GENOMIC DNA]</scope>
    <source>
        <strain>O44:K74</strain>
    </source>
</reference>
<reference key="2">
    <citation type="journal article" date="1997" name="Science">
        <title>The complete genome sequence of Escherichia coli K-12.</title>
        <authorList>
            <person name="Blattner F.R."/>
            <person name="Plunkett G. III"/>
            <person name="Bloch C.A."/>
            <person name="Perna N.T."/>
            <person name="Burland V."/>
            <person name="Riley M."/>
            <person name="Collado-Vides J."/>
            <person name="Glasner J.D."/>
            <person name="Rode C.K."/>
            <person name="Mayhew G.F."/>
            <person name="Gregor J."/>
            <person name="Davis N.W."/>
            <person name="Kirkpatrick H.A."/>
            <person name="Goeden M.A."/>
            <person name="Rose D.J."/>
            <person name="Mau B."/>
            <person name="Shao Y."/>
        </authorList>
    </citation>
    <scope>NUCLEOTIDE SEQUENCE [LARGE SCALE GENOMIC DNA]</scope>
    <source>
        <strain>K12 / MG1655 / ATCC 47076</strain>
    </source>
</reference>
<reference key="3">
    <citation type="journal article" date="2006" name="Mol. Syst. Biol.">
        <title>Highly accurate genome sequences of Escherichia coli K-12 strains MG1655 and W3110.</title>
        <authorList>
            <person name="Hayashi K."/>
            <person name="Morooka N."/>
            <person name="Yamamoto Y."/>
            <person name="Fujita K."/>
            <person name="Isono K."/>
            <person name="Choi S."/>
            <person name="Ohtsubo E."/>
            <person name="Baba T."/>
            <person name="Wanner B.L."/>
            <person name="Mori H."/>
            <person name="Horiuchi T."/>
        </authorList>
    </citation>
    <scope>NUCLEOTIDE SEQUENCE [LARGE SCALE GENOMIC DNA]</scope>
    <source>
        <strain>K12 / W3110 / ATCC 27325 / DSM 5911</strain>
    </source>
</reference>
<comment type="function">
    <text>Potential transcriptional activator of carnitine metabolism.</text>
</comment>
<feature type="chain" id="PRO_0000089284" description="Transcriptional activatory protein CaiF">
    <location>
        <begin position="1"/>
        <end position="131"/>
    </location>
</feature>
<proteinExistence type="predicted"/>
<dbReference type="EMBL" id="X80644">
    <property type="protein sequence ID" value="CAA56690.1"/>
    <property type="molecule type" value="Genomic_DNA"/>
</dbReference>
<dbReference type="EMBL" id="U00096">
    <property type="protein sequence ID" value="AAC73145.2"/>
    <property type="molecule type" value="Genomic_DNA"/>
</dbReference>
<dbReference type="EMBL" id="AP009048">
    <property type="protein sequence ID" value="BAE76036.1"/>
    <property type="molecule type" value="Genomic_DNA"/>
</dbReference>
<dbReference type="RefSeq" id="NP_414576.4">
    <property type="nucleotide sequence ID" value="NC_000913.3"/>
</dbReference>
<dbReference type="RefSeq" id="WP_000333125.1">
    <property type="nucleotide sequence ID" value="NZ_STEB01000010.1"/>
</dbReference>
<dbReference type="SMR" id="P0AE58"/>
<dbReference type="BioGRID" id="4263346">
    <property type="interactions" value="107"/>
</dbReference>
<dbReference type="BioGRID" id="849196">
    <property type="interactions" value="4"/>
</dbReference>
<dbReference type="FunCoup" id="P0AE58">
    <property type="interactions" value="66"/>
</dbReference>
<dbReference type="IntAct" id="P0AE58">
    <property type="interactions" value="10"/>
</dbReference>
<dbReference type="STRING" id="511145.b0034"/>
<dbReference type="PaxDb" id="511145-b0034"/>
<dbReference type="EnsemblBacteria" id="AAC73145">
    <property type="protein sequence ID" value="AAC73145"/>
    <property type="gene ID" value="b0034"/>
</dbReference>
<dbReference type="GeneID" id="944795"/>
<dbReference type="KEGG" id="ecj:JW0033"/>
<dbReference type="KEGG" id="eco:b0034"/>
<dbReference type="KEGG" id="ecoc:C3026_00180"/>
<dbReference type="PATRIC" id="fig|1411691.4.peg.2249"/>
<dbReference type="EchoBASE" id="EB3224"/>
<dbReference type="eggNOG" id="ENOG5030W1N">
    <property type="taxonomic scope" value="Bacteria"/>
</dbReference>
<dbReference type="HOGENOM" id="CLU_144191_0_0_6"/>
<dbReference type="InParanoid" id="P0AE58"/>
<dbReference type="OMA" id="IECETRT"/>
<dbReference type="OrthoDB" id="6586425at2"/>
<dbReference type="PhylomeDB" id="P0AE58"/>
<dbReference type="BioCyc" id="EcoCyc:G6088-MONOMER"/>
<dbReference type="PRO" id="PR:P0AE58"/>
<dbReference type="Proteomes" id="UP000000625">
    <property type="component" value="Chromosome"/>
</dbReference>
<dbReference type="GO" id="GO:0003700">
    <property type="term" value="F:DNA-binding transcription factor activity"/>
    <property type="evidence" value="ECO:0000314"/>
    <property type="project" value="EcoCyc"/>
</dbReference>
<dbReference type="GO" id="GO:0009437">
    <property type="term" value="P:carnitine metabolic process"/>
    <property type="evidence" value="ECO:0000269"/>
    <property type="project" value="EcoliWiki"/>
</dbReference>
<dbReference type="GO" id="GO:0006351">
    <property type="term" value="P:DNA-templated transcription"/>
    <property type="evidence" value="ECO:0000314"/>
    <property type="project" value="EcoCyc"/>
</dbReference>
<dbReference type="GO" id="GO:0006355">
    <property type="term" value="P:regulation of DNA-templated transcription"/>
    <property type="evidence" value="ECO:0000314"/>
    <property type="project" value="EcoCyc"/>
</dbReference>
<dbReference type="FunFam" id="1.10.10.10:FF:000309">
    <property type="entry name" value="Transcriptional activatory protein CaiF"/>
    <property type="match status" value="1"/>
</dbReference>
<dbReference type="Gene3D" id="1.10.10.10">
    <property type="entry name" value="Winged helix-like DNA-binding domain superfamily/Winged helix DNA-binding domain"/>
    <property type="match status" value="1"/>
</dbReference>
<dbReference type="InterPro" id="IPR020357">
    <property type="entry name" value="Tscrpt_reg_CaiF/GrlA"/>
</dbReference>
<dbReference type="InterPro" id="IPR036388">
    <property type="entry name" value="WH-like_DNA-bd_sf"/>
</dbReference>
<dbReference type="NCBIfam" id="NF008549">
    <property type="entry name" value="PRK11476.1"/>
    <property type="match status" value="1"/>
</dbReference>
<dbReference type="Pfam" id="PF07180">
    <property type="entry name" value="CaiF_GrlA"/>
    <property type="match status" value="1"/>
</dbReference>
<organism>
    <name type="scientific">Escherichia coli (strain K12)</name>
    <dbReference type="NCBI Taxonomy" id="83333"/>
    <lineage>
        <taxon>Bacteria</taxon>
        <taxon>Pseudomonadati</taxon>
        <taxon>Pseudomonadota</taxon>
        <taxon>Gammaproteobacteria</taxon>
        <taxon>Enterobacterales</taxon>
        <taxon>Enterobacteriaceae</taxon>
        <taxon>Escherichia</taxon>
    </lineage>
</organism>
<protein>
    <recommendedName>
        <fullName>Transcriptional activatory protein CaiF</fullName>
    </recommendedName>
</protein>